<gene>
    <name type="primary">RH48</name>
    <name type="ordered locus">At1g63250</name>
    <name type="ORF">F9N12.13</name>
</gene>
<reference key="1">
    <citation type="journal article" date="2000" name="Nature">
        <title>Sequence and analysis of chromosome 1 of the plant Arabidopsis thaliana.</title>
        <authorList>
            <person name="Theologis A."/>
            <person name="Ecker J.R."/>
            <person name="Palm C.J."/>
            <person name="Federspiel N.A."/>
            <person name="Kaul S."/>
            <person name="White O."/>
            <person name="Alonso J."/>
            <person name="Altafi H."/>
            <person name="Araujo R."/>
            <person name="Bowman C.L."/>
            <person name="Brooks S.Y."/>
            <person name="Buehler E."/>
            <person name="Chan A."/>
            <person name="Chao Q."/>
            <person name="Chen H."/>
            <person name="Cheuk R.F."/>
            <person name="Chin C.W."/>
            <person name="Chung M.K."/>
            <person name="Conn L."/>
            <person name="Conway A.B."/>
            <person name="Conway A.R."/>
            <person name="Creasy T.H."/>
            <person name="Dewar K."/>
            <person name="Dunn P."/>
            <person name="Etgu P."/>
            <person name="Feldblyum T.V."/>
            <person name="Feng J.-D."/>
            <person name="Fong B."/>
            <person name="Fujii C.Y."/>
            <person name="Gill J.E."/>
            <person name="Goldsmith A.D."/>
            <person name="Haas B."/>
            <person name="Hansen N.F."/>
            <person name="Hughes B."/>
            <person name="Huizar L."/>
            <person name="Hunter J.L."/>
            <person name="Jenkins J."/>
            <person name="Johnson-Hopson C."/>
            <person name="Khan S."/>
            <person name="Khaykin E."/>
            <person name="Kim C.J."/>
            <person name="Koo H.L."/>
            <person name="Kremenetskaia I."/>
            <person name="Kurtz D.B."/>
            <person name="Kwan A."/>
            <person name="Lam B."/>
            <person name="Langin-Hooper S."/>
            <person name="Lee A."/>
            <person name="Lee J.M."/>
            <person name="Lenz C.A."/>
            <person name="Li J.H."/>
            <person name="Li Y.-P."/>
            <person name="Lin X."/>
            <person name="Liu S.X."/>
            <person name="Liu Z.A."/>
            <person name="Luros J.S."/>
            <person name="Maiti R."/>
            <person name="Marziali A."/>
            <person name="Militscher J."/>
            <person name="Miranda M."/>
            <person name="Nguyen M."/>
            <person name="Nierman W.C."/>
            <person name="Osborne B.I."/>
            <person name="Pai G."/>
            <person name="Peterson J."/>
            <person name="Pham P.K."/>
            <person name="Rizzo M."/>
            <person name="Rooney T."/>
            <person name="Rowley D."/>
            <person name="Sakano H."/>
            <person name="Salzberg S.L."/>
            <person name="Schwartz J.R."/>
            <person name="Shinn P."/>
            <person name="Southwick A.M."/>
            <person name="Sun H."/>
            <person name="Tallon L.J."/>
            <person name="Tambunga G."/>
            <person name="Toriumi M.J."/>
            <person name="Town C.D."/>
            <person name="Utterback T."/>
            <person name="Van Aken S."/>
            <person name="Vaysberg M."/>
            <person name="Vysotskaia V.S."/>
            <person name="Walker M."/>
            <person name="Wu D."/>
            <person name="Yu G."/>
            <person name="Fraser C.M."/>
            <person name="Venter J.C."/>
            <person name="Davis R.W."/>
        </authorList>
    </citation>
    <scope>NUCLEOTIDE SEQUENCE [LARGE SCALE GENOMIC DNA]</scope>
    <source>
        <strain>cv. Columbia</strain>
    </source>
</reference>
<reference key="2">
    <citation type="journal article" date="2017" name="Plant J.">
        <title>Araport11: a complete reannotation of the Arabidopsis thaliana reference genome.</title>
        <authorList>
            <person name="Cheng C.Y."/>
            <person name="Krishnakumar V."/>
            <person name="Chan A.P."/>
            <person name="Thibaud-Nissen F."/>
            <person name="Schobel S."/>
            <person name="Town C.D."/>
        </authorList>
    </citation>
    <scope>GENOME REANNOTATION</scope>
    <source>
        <strain>cv. Columbia</strain>
    </source>
</reference>
<reference key="3">
    <citation type="journal article" date="2004" name="Plant Biotechnol. J.">
        <title>DEAD-box RNA helicases in Arabidopsis thaliana: establishing a link between quantitative expression, gene structure and evolution of a family of genes.</title>
        <authorList>
            <person name="Mingam A."/>
            <person name="Toffano-Nioche C."/>
            <person name="Brunaud V."/>
            <person name="Boudet N."/>
            <person name="Kreis M."/>
            <person name="Lecharny A."/>
        </authorList>
    </citation>
    <scope>GENE FAMILY</scope>
    <scope>NOMENCLATURE</scope>
</reference>
<reference key="4">
    <citation type="journal article" date="2013" name="PLoS ONE">
        <title>Genome-wide comparative in silico analysis of the RNA helicase gene family in Zea mays and Glycine max: a comparison with Arabidopsis and Oryza sativa.</title>
        <authorList>
            <person name="Xu R."/>
            <person name="Zhang S."/>
            <person name="Huang J."/>
            <person name="Zheng C."/>
        </authorList>
    </citation>
    <scope>GENE FAMILY</scope>
</reference>
<comment type="catalytic activity">
    <reaction>
        <text>ATP + H2O = ADP + phosphate + H(+)</text>
        <dbReference type="Rhea" id="RHEA:13065"/>
        <dbReference type="ChEBI" id="CHEBI:15377"/>
        <dbReference type="ChEBI" id="CHEBI:15378"/>
        <dbReference type="ChEBI" id="CHEBI:30616"/>
        <dbReference type="ChEBI" id="CHEBI:43474"/>
        <dbReference type="ChEBI" id="CHEBI:456216"/>
        <dbReference type="EC" id="3.6.4.13"/>
    </reaction>
</comment>
<comment type="domain">
    <text>The Q motif is unique to and characteristic of the DEAD box family of RNA helicases and controls ATP binding and hydrolysis.</text>
</comment>
<comment type="similarity">
    <text evidence="4">Belongs to the DEAD box helicase family.</text>
</comment>
<keyword id="KW-0067">ATP-binding</keyword>
<keyword id="KW-0347">Helicase</keyword>
<keyword id="KW-0378">Hydrolase</keyword>
<keyword id="KW-0547">Nucleotide-binding</keyword>
<keyword id="KW-1185">Reference proteome</keyword>
<keyword id="KW-0694">RNA-binding</keyword>
<name>RH48_ARATH</name>
<proteinExistence type="inferred from homology"/>
<accession>Q9C8S9</accession>
<protein>
    <recommendedName>
        <fullName>Probable DEAD-box ATP-dependent RNA helicase 48</fullName>
        <ecNumber>3.6.4.13</ecNumber>
    </recommendedName>
</protein>
<feature type="chain" id="PRO_0000239188" description="Probable DEAD-box ATP-dependent RNA helicase 48">
    <location>
        <begin position="1"/>
        <end position="798"/>
    </location>
</feature>
<feature type="domain" description="Helicase ATP-binding" evidence="1">
    <location>
        <begin position="359"/>
        <end position="543"/>
    </location>
</feature>
<feature type="domain" description="Helicase C-terminal" evidence="2">
    <location>
        <begin position="577"/>
        <end position="726"/>
    </location>
</feature>
<feature type="region of interest" description="Disordered" evidence="3">
    <location>
        <begin position="76"/>
        <end position="100"/>
    </location>
</feature>
<feature type="region of interest" description="Disordered" evidence="3">
    <location>
        <begin position="117"/>
        <end position="148"/>
    </location>
</feature>
<feature type="region of interest" description="Disordered" evidence="3">
    <location>
        <begin position="236"/>
        <end position="257"/>
    </location>
</feature>
<feature type="short sequence motif" description="Q motif">
    <location>
        <begin position="328"/>
        <end position="356"/>
    </location>
</feature>
<feature type="short sequence motif" description="DEAD box">
    <location>
        <begin position="491"/>
        <end position="494"/>
    </location>
</feature>
<feature type="compositionally biased region" description="Low complexity" evidence="3">
    <location>
        <begin position="132"/>
        <end position="148"/>
    </location>
</feature>
<feature type="compositionally biased region" description="Acidic residues" evidence="3">
    <location>
        <begin position="242"/>
        <end position="252"/>
    </location>
</feature>
<feature type="binding site" evidence="1">
    <location>
        <begin position="372"/>
        <end position="379"/>
    </location>
    <ligand>
        <name>ATP</name>
        <dbReference type="ChEBI" id="CHEBI:30616"/>
    </ligand>
</feature>
<evidence type="ECO:0000255" key="1">
    <source>
        <dbReference type="PROSITE-ProRule" id="PRU00541"/>
    </source>
</evidence>
<evidence type="ECO:0000255" key="2">
    <source>
        <dbReference type="PROSITE-ProRule" id="PRU00542"/>
    </source>
</evidence>
<evidence type="ECO:0000256" key="3">
    <source>
        <dbReference type="SAM" id="MobiDB-lite"/>
    </source>
</evidence>
<evidence type="ECO:0000305" key="4"/>
<dbReference type="EC" id="3.6.4.13"/>
<dbReference type="EMBL" id="AC022355">
    <property type="protein sequence ID" value="AAG52143.1"/>
    <property type="molecule type" value="Genomic_DNA"/>
</dbReference>
<dbReference type="EMBL" id="CP002684">
    <property type="protein sequence ID" value="AEE34076.1"/>
    <property type="molecule type" value="Genomic_DNA"/>
</dbReference>
<dbReference type="PIR" id="C96658">
    <property type="entry name" value="C96658"/>
</dbReference>
<dbReference type="RefSeq" id="NP_176514.1">
    <property type="nucleotide sequence ID" value="NM_105004.3"/>
</dbReference>
<dbReference type="SMR" id="Q9C8S9"/>
<dbReference type="FunCoup" id="Q9C8S9">
    <property type="interactions" value="858"/>
</dbReference>
<dbReference type="IntAct" id="Q9C8S9">
    <property type="interactions" value="1"/>
</dbReference>
<dbReference type="STRING" id="3702.Q9C8S9"/>
<dbReference type="iPTMnet" id="Q9C8S9"/>
<dbReference type="PaxDb" id="3702-AT1G63250.1"/>
<dbReference type="ProteomicsDB" id="236168"/>
<dbReference type="EnsemblPlants" id="AT1G63250.1">
    <property type="protein sequence ID" value="AT1G63250.1"/>
    <property type="gene ID" value="AT1G63250"/>
</dbReference>
<dbReference type="GeneID" id="842631"/>
<dbReference type="Gramene" id="AT1G63250.1">
    <property type="protein sequence ID" value="AT1G63250.1"/>
    <property type="gene ID" value="AT1G63250"/>
</dbReference>
<dbReference type="KEGG" id="ath:AT1G63250"/>
<dbReference type="Araport" id="AT1G63250"/>
<dbReference type="TAIR" id="AT1G63250"/>
<dbReference type="eggNOG" id="KOG0342">
    <property type="taxonomic scope" value="Eukaryota"/>
</dbReference>
<dbReference type="HOGENOM" id="CLU_003041_26_6_1"/>
<dbReference type="InParanoid" id="Q9C8S9"/>
<dbReference type="OMA" id="NAMLKYH"/>
<dbReference type="PhylomeDB" id="Q9C8S9"/>
<dbReference type="PRO" id="PR:Q9C8S9"/>
<dbReference type="Proteomes" id="UP000006548">
    <property type="component" value="Chromosome 1"/>
</dbReference>
<dbReference type="ExpressionAtlas" id="Q9C8S9">
    <property type="expression patterns" value="baseline and differential"/>
</dbReference>
<dbReference type="GO" id="GO:0005524">
    <property type="term" value="F:ATP binding"/>
    <property type="evidence" value="ECO:0007669"/>
    <property type="project" value="UniProtKB-KW"/>
</dbReference>
<dbReference type="GO" id="GO:0016887">
    <property type="term" value="F:ATP hydrolysis activity"/>
    <property type="evidence" value="ECO:0007669"/>
    <property type="project" value="RHEA"/>
</dbReference>
<dbReference type="GO" id="GO:0003723">
    <property type="term" value="F:RNA binding"/>
    <property type="evidence" value="ECO:0007669"/>
    <property type="project" value="UniProtKB-KW"/>
</dbReference>
<dbReference type="GO" id="GO:0003724">
    <property type="term" value="F:RNA helicase activity"/>
    <property type="evidence" value="ECO:0007669"/>
    <property type="project" value="UniProtKB-EC"/>
</dbReference>
<dbReference type="CDD" id="cd18787">
    <property type="entry name" value="SF2_C_DEAD"/>
    <property type="match status" value="1"/>
</dbReference>
<dbReference type="Gene3D" id="3.40.50.300">
    <property type="entry name" value="P-loop containing nucleotide triphosphate hydrolases"/>
    <property type="match status" value="2"/>
</dbReference>
<dbReference type="InterPro" id="IPR011545">
    <property type="entry name" value="DEAD/DEAH_box_helicase_dom"/>
</dbReference>
<dbReference type="InterPro" id="IPR014001">
    <property type="entry name" value="Helicase_ATP-bd"/>
</dbReference>
<dbReference type="InterPro" id="IPR001650">
    <property type="entry name" value="Helicase_C-like"/>
</dbReference>
<dbReference type="InterPro" id="IPR027417">
    <property type="entry name" value="P-loop_NTPase"/>
</dbReference>
<dbReference type="InterPro" id="IPR014014">
    <property type="entry name" value="RNA_helicase_DEAD_Q_motif"/>
</dbReference>
<dbReference type="PANTHER" id="PTHR24031">
    <property type="entry name" value="RNA HELICASE"/>
    <property type="match status" value="1"/>
</dbReference>
<dbReference type="Pfam" id="PF00270">
    <property type="entry name" value="DEAD"/>
    <property type="match status" value="1"/>
</dbReference>
<dbReference type="Pfam" id="PF00271">
    <property type="entry name" value="Helicase_C"/>
    <property type="match status" value="1"/>
</dbReference>
<dbReference type="SMART" id="SM00487">
    <property type="entry name" value="DEXDc"/>
    <property type="match status" value="1"/>
</dbReference>
<dbReference type="SMART" id="SM00490">
    <property type="entry name" value="HELICc"/>
    <property type="match status" value="1"/>
</dbReference>
<dbReference type="SUPFAM" id="SSF52540">
    <property type="entry name" value="P-loop containing nucleoside triphosphate hydrolases"/>
    <property type="match status" value="2"/>
</dbReference>
<dbReference type="PROSITE" id="PS51192">
    <property type="entry name" value="HELICASE_ATP_BIND_1"/>
    <property type="match status" value="1"/>
</dbReference>
<dbReference type="PROSITE" id="PS51194">
    <property type="entry name" value="HELICASE_CTER"/>
    <property type="match status" value="1"/>
</dbReference>
<dbReference type="PROSITE" id="PS51195">
    <property type="entry name" value="Q_MOTIF"/>
    <property type="match status" value="1"/>
</dbReference>
<sequence>MYSLILRERSGSITGSLWNRISSRNMGGGPRTFPGGLNKWQWKRMHEKKAREKENKLLDQEKQLYEARIRTEIRAKMWGNPDSGEKTAKSKQSHGPMSPKEHIKTLADRFMKAGAEDFWNENDGPVKKSDQGSRSGSDSIDSTSNSPIDVRRLVSATCDSMGKNRVFGSSRRGFSSMSRFKRNESSCDEGDDFDAKKLDTLSPFSPKFAGTKEKVKSSRSVVGVIRNKGLFGRRKFRKNDSSTEEDSDEEGDEGKMIGWMDMRKTGSSASLGNHDIKLTKRVNRNVTDEELYPPLDINTVREDLSKRKSVDNVMEEKQEPHDSIYSAKRFDESCISPLTLKALSASGILKMTRVQDATLSECLDGKDALVKAKTGTGKSMAFLLPAIETVLKAMNSGKGVNKVAPIFALILCPTRELASQIAAEGKALLKFHDGIGVQTLIGGTRFKLDQQRLESEPCQILIATPGRLLDHIENKSGLTSRLMALKLFIVDEADLLLDLGFRRDVEKIIDCLPRQRQSLLFSATIPKEVRRVSQLVLKRDHSYIDTIGLGCVETHDKVRQSCIVAPHESHFHLVPHLLKEHINNTPDYKIIVFCSTGMVTSLMYTLLREMKLNVREIHARKPQLHRTRVSDEFKESNRLILVTSDVSARGMNYPDVTLVIQVGIPSDREQYIHRLGRTGREGKGGEGLLLIAPWERYFLDELKDLPLEPIPAPDLDSIVKHQVDQSMAKIDTSIKEAAYHAWLGYYNSVRETGRDKTTLAELANRFCHSIGLEKPPALFRRTAVKMGLKGISGIPIRK</sequence>
<organism>
    <name type="scientific">Arabidopsis thaliana</name>
    <name type="common">Mouse-ear cress</name>
    <dbReference type="NCBI Taxonomy" id="3702"/>
    <lineage>
        <taxon>Eukaryota</taxon>
        <taxon>Viridiplantae</taxon>
        <taxon>Streptophyta</taxon>
        <taxon>Embryophyta</taxon>
        <taxon>Tracheophyta</taxon>
        <taxon>Spermatophyta</taxon>
        <taxon>Magnoliopsida</taxon>
        <taxon>eudicotyledons</taxon>
        <taxon>Gunneridae</taxon>
        <taxon>Pentapetalae</taxon>
        <taxon>rosids</taxon>
        <taxon>malvids</taxon>
        <taxon>Brassicales</taxon>
        <taxon>Brassicaceae</taxon>
        <taxon>Camelineae</taxon>
        <taxon>Arabidopsis</taxon>
    </lineage>
</organism>